<protein>
    <recommendedName>
        <fullName evidence="9">Xanthomonalisin</fullName>
        <ecNumber evidence="5 7">3.4.21.101</ecNumber>
    </recommendedName>
    <alternativeName>
        <fullName evidence="9">Xanthomonapepsin</fullName>
    </alternativeName>
    <alternativeName>
        <fullName>Xanthomonas aspartic proteinase</fullName>
    </alternativeName>
    <alternativeName>
        <fullName evidence="8">Xanthomonas carboxyl proteinase</fullName>
        <shortName evidence="8">XCP</shortName>
    </alternativeName>
</protein>
<dbReference type="EC" id="3.4.21.101" evidence="5 7"/>
<dbReference type="EMBL" id="D83740">
    <property type="protein sequence ID" value="BAA12093.1"/>
    <property type="molecule type" value="Genomic_DNA"/>
</dbReference>
<dbReference type="SMR" id="Q60106"/>
<dbReference type="MEROPS" id="S53.002"/>
<dbReference type="KEGG" id="ag:BAA12093"/>
<dbReference type="BRENDA" id="3.4.21.101">
    <property type="organism ID" value="6720"/>
</dbReference>
<dbReference type="GO" id="GO:0005576">
    <property type="term" value="C:extracellular region"/>
    <property type="evidence" value="ECO:0007669"/>
    <property type="project" value="UniProtKB-SubCell"/>
</dbReference>
<dbReference type="GO" id="GO:0046872">
    <property type="term" value="F:metal ion binding"/>
    <property type="evidence" value="ECO:0007669"/>
    <property type="project" value="UniProtKB-KW"/>
</dbReference>
<dbReference type="GO" id="GO:0004252">
    <property type="term" value="F:serine-type endopeptidase activity"/>
    <property type="evidence" value="ECO:0007669"/>
    <property type="project" value="InterPro"/>
</dbReference>
<dbReference type="GO" id="GO:0008240">
    <property type="term" value="F:tripeptidyl-peptidase activity"/>
    <property type="evidence" value="ECO:0007669"/>
    <property type="project" value="TreeGrafter"/>
</dbReference>
<dbReference type="GO" id="GO:0006508">
    <property type="term" value="P:proteolysis"/>
    <property type="evidence" value="ECO:0007669"/>
    <property type="project" value="UniProtKB-KW"/>
</dbReference>
<dbReference type="CDD" id="cd04056">
    <property type="entry name" value="Peptidases_S53"/>
    <property type="match status" value="1"/>
</dbReference>
<dbReference type="CDD" id="cd00146">
    <property type="entry name" value="PKD"/>
    <property type="match status" value="1"/>
</dbReference>
<dbReference type="CDD" id="cd11377">
    <property type="entry name" value="Pro-peptidase_S53"/>
    <property type="match status" value="1"/>
</dbReference>
<dbReference type="FunFam" id="2.60.120.380:FF:000013">
    <property type="entry name" value="Alkaline serine protease"/>
    <property type="match status" value="1"/>
</dbReference>
<dbReference type="Gene3D" id="2.60.120.380">
    <property type="match status" value="1"/>
</dbReference>
<dbReference type="Gene3D" id="2.60.40.10">
    <property type="entry name" value="Immunoglobulins"/>
    <property type="match status" value="1"/>
</dbReference>
<dbReference type="Gene3D" id="3.40.50.200">
    <property type="entry name" value="Peptidase S8/S53 domain"/>
    <property type="match status" value="1"/>
</dbReference>
<dbReference type="InterPro" id="IPR013783">
    <property type="entry name" value="Ig-like_fold"/>
</dbReference>
<dbReference type="InterPro" id="IPR007280">
    <property type="entry name" value="Peptidase_C_arc/bac"/>
</dbReference>
<dbReference type="InterPro" id="IPR036852">
    <property type="entry name" value="Peptidase_S8/S53_dom_sf"/>
</dbReference>
<dbReference type="InterPro" id="IPR023828">
    <property type="entry name" value="Peptidase_S8_Ser-AS"/>
</dbReference>
<dbReference type="InterPro" id="IPR022409">
    <property type="entry name" value="PKD/Chitinase_dom"/>
</dbReference>
<dbReference type="InterPro" id="IPR000601">
    <property type="entry name" value="PKD_dom"/>
</dbReference>
<dbReference type="InterPro" id="IPR035986">
    <property type="entry name" value="PKD_dom_sf"/>
</dbReference>
<dbReference type="InterPro" id="IPR015366">
    <property type="entry name" value="S53_propep"/>
</dbReference>
<dbReference type="InterPro" id="IPR030400">
    <property type="entry name" value="Sedolisin_dom"/>
</dbReference>
<dbReference type="InterPro" id="IPR050819">
    <property type="entry name" value="Tripeptidyl-peptidase_I"/>
</dbReference>
<dbReference type="PANTHER" id="PTHR14218">
    <property type="entry name" value="PROTEASE S8 TRIPEPTIDYL PEPTIDASE I CLN2"/>
    <property type="match status" value="1"/>
</dbReference>
<dbReference type="PANTHER" id="PTHR14218:SF15">
    <property type="entry name" value="TRIPEPTIDYL-PEPTIDASE 1"/>
    <property type="match status" value="1"/>
</dbReference>
<dbReference type="Pfam" id="PF18911">
    <property type="entry name" value="PKD_4"/>
    <property type="match status" value="1"/>
</dbReference>
<dbReference type="Pfam" id="PF04151">
    <property type="entry name" value="PPC"/>
    <property type="match status" value="1"/>
</dbReference>
<dbReference type="Pfam" id="PF09286">
    <property type="entry name" value="Pro-kuma_activ"/>
    <property type="match status" value="1"/>
</dbReference>
<dbReference type="SMART" id="SM00089">
    <property type="entry name" value="PKD"/>
    <property type="match status" value="1"/>
</dbReference>
<dbReference type="SMART" id="SM00944">
    <property type="entry name" value="Pro-kuma_activ"/>
    <property type="match status" value="1"/>
</dbReference>
<dbReference type="SUPFAM" id="SSF49299">
    <property type="entry name" value="PKD domain"/>
    <property type="match status" value="1"/>
</dbReference>
<dbReference type="SUPFAM" id="SSF54897">
    <property type="entry name" value="Protease propeptides/inhibitors"/>
    <property type="match status" value="1"/>
</dbReference>
<dbReference type="SUPFAM" id="SSF52743">
    <property type="entry name" value="Subtilisin-like"/>
    <property type="match status" value="1"/>
</dbReference>
<dbReference type="PROSITE" id="PS50093">
    <property type="entry name" value="PKD"/>
    <property type="match status" value="1"/>
</dbReference>
<dbReference type="PROSITE" id="PS51695">
    <property type="entry name" value="SEDOLISIN"/>
    <property type="match status" value="1"/>
</dbReference>
<organism>
    <name type="scientific">Xanthomonas sp. (strain T-22)</name>
    <dbReference type="NCBI Taxonomy" id="136420"/>
    <lineage>
        <taxon>Bacteria</taxon>
        <taxon>Pseudomonadati</taxon>
        <taxon>Pseudomonadota</taxon>
        <taxon>Gammaproteobacteria</taxon>
        <taxon>Lysobacterales</taxon>
        <taxon>Lysobacteraceae</taxon>
        <taxon>Xanthomonas</taxon>
    </lineage>
</organism>
<reference key="1">
    <citation type="journal article" date="1996" name="J. Biochem.">
        <title>Cloning and expression of an isovaleryl pepstatin-insensitive carboxyl proteinase gene from Xanthomonas sp. T-22.</title>
        <authorList>
            <person name="Oda K."/>
            <person name="Ito M."/>
            <person name="Uchida K."/>
            <person name="Shibano Y."/>
            <person name="Fukuhara K."/>
            <person name="Takahashi S."/>
        </authorList>
    </citation>
    <scope>NUCLEOTIDE SEQUENCE [GENOMIC DNA]</scope>
    <scope>PROTEIN SEQUENCE OF 238-257; 473-499; 559-579 AND 618-635</scope>
    <scope>FUNCTION</scope>
    <scope>BIOPHYSICOCHEMICAL PROPERTIES</scope>
    <scope>SUBCELLULAR LOCATION</scope>
    <scope>PROTEOLYTIC CLEAVAGE</scope>
    <source>
        <strain>T-22</strain>
    </source>
</reference>
<reference key="2">
    <citation type="journal article" date="1987" name="Agric. Biol. Chem.">
        <title>Purification and properties of an S-PI(pepstatin Ac)-insensitive carboxyl proteinase from a Xanthomonas sp. Bacterium.</title>
        <authorList>
            <person name="Oda K."/>
            <person name="Nakazima T."/>
            <person name="Terashita T."/>
            <person name="Suzuki K.I."/>
            <person name="Murao S."/>
        </authorList>
    </citation>
    <scope>FUNCTION</scope>
    <scope>CATALYTIC ACTIVITY</scope>
    <scope>ACTIVITY REGULATION</scope>
    <scope>BIOPHYSICOCHEMICAL PROPERTIES</scope>
    <scope>SUBCELLULAR LOCATION</scope>
    <source>
        <strain>T-22</strain>
    </source>
</reference>
<reference key="3">
    <citation type="journal article" date="1999" name="J. Biol. Chem.">
        <title>Identification of catalytic residues of pepstatin-insensitive carboxyl proteinases from prokaryotes by site-directed mutagenesis.</title>
        <authorList>
            <person name="Oyama H."/>
            <person name="Abe S."/>
            <person name="Ushiyama S."/>
            <person name="Takahashi S."/>
            <person name="Oda K."/>
        </authorList>
    </citation>
    <scope>FUNCTION</scope>
    <scope>CATALYTIC ACTIVITY</scope>
    <scope>PROTEOLYTIC CLEAVAGE</scope>
    <scope>MUTAGENESIS OF ASP-316; ASP-406; GLU-467; GLU-472 AND ASP-585</scope>
</reference>
<keyword id="KW-0106">Calcium</keyword>
<keyword id="KW-0903">Direct protein sequencing</keyword>
<keyword id="KW-0378">Hydrolase</keyword>
<keyword id="KW-0479">Metal-binding</keyword>
<keyword id="KW-0645">Protease</keyword>
<keyword id="KW-0964">Secreted</keyword>
<keyword id="KW-0720">Serine protease</keyword>
<keyword id="KW-0732">Signal</keyword>
<keyword id="KW-0865">Zymogen</keyword>
<feature type="signal peptide" evidence="2">
    <location>
        <begin position="1"/>
        <end position="23"/>
    </location>
</feature>
<feature type="propeptide" id="PRO_0000027365" description="Removed in mature form" evidence="6">
    <location>
        <begin position="24"/>
        <end position="237"/>
    </location>
</feature>
<feature type="chain" id="PRO_0000027366" description="Xanthomonalisin" evidence="6">
    <location>
        <begin position="238"/>
        <end position="635"/>
    </location>
</feature>
<feature type="propeptide" id="PRO_0000027367" description="Removed in mature form" evidence="6">
    <location>
        <begin position="636"/>
        <end position="827"/>
    </location>
</feature>
<feature type="domain" description="Peptidase S53" evidence="4">
    <location>
        <begin position="241"/>
        <end position="625"/>
    </location>
</feature>
<feature type="domain" description="PKD" evidence="3">
    <location>
        <begin position="635"/>
        <end position="722"/>
    </location>
</feature>
<feature type="active site" description="Charge relay system" evidence="4">
    <location>
        <position position="312"/>
    </location>
</feature>
<feature type="active site" description="Charge relay system" evidence="4">
    <location>
        <position position="316"/>
    </location>
</feature>
<feature type="active site" description="Charge relay system" evidence="4">
    <location>
        <position position="544"/>
    </location>
</feature>
<feature type="binding site" evidence="1">
    <location>
        <position position="585"/>
    </location>
    <ligand>
        <name>Ca(2+)</name>
        <dbReference type="ChEBI" id="CHEBI:29108"/>
    </ligand>
</feature>
<feature type="binding site" evidence="1">
    <location>
        <position position="586"/>
    </location>
    <ligand>
        <name>Ca(2+)</name>
        <dbReference type="ChEBI" id="CHEBI:29108"/>
    </ligand>
</feature>
<feature type="binding site" evidence="1">
    <location>
        <position position="601"/>
    </location>
    <ligand>
        <name>Ca(2+)</name>
        <dbReference type="ChEBI" id="CHEBI:29108"/>
    </ligand>
</feature>
<feature type="binding site" evidence="1">
    <location>
        <position position="603"/>
    </location>
    <ligand>
        <name>Ca(2+)</name>
        <dbReference type="ChEBI" id="CHEBI:29108"/>
    </ligand>
</feature>
<feature type="binding site" evidence="1">
    <location>
        <position position="605"/>
    </location>
    <ligand>
        <name>Ca(2+)</name>
        <dbReference type="ChEBI" id="CHEBI:29108"/>
    </ligand>
</feature>
<feature type="mutagenesis site" description="Loses both auto-processing activity and proteolytic activity." evidence="5">
    <original>D</original>
    <variation>A</variation>
    <location>
        <position position="316"/>
    </location>
</feature>
<feature type="mutagenesis site" description="Loses both auto-processing activity and proteolytic activity." evidence="5">
    <original>D</original>
    <variation>A</variation>
    <location>
        <position position="406"/>
    </location>
</feature>
<feature type="mutagenesis site" description="Retains auto-processing activity, but shows a decrease in activity with casein as substrate." evidence="5">
    <original>E</original>
    <variation>A</variation>
    <location>
        <position position="467"/>
    </location>
</feature>
<feature type="mutagenesis site" description="Retains auto-processing activity, but shows a decrease in activity with casein as substrate." evidence="5">
    <original>E</original>
    <variation>A</variation>
    <location>
        <position position="472"/>
    </location>
</feature>
<feature type="mutagenesis site" description="Loses both auto-processing activity and proteolytic activity." evidence="5">
    <original>D</original>
    <variation>A</variation>
    <location>
        <position position="585"/>
    </location>
</feature>
<name>XANP_XANS2</name>
<proteinExistence type="evidence at protein level"/>
<accession>Q60106</accession>
<comment type="function">
    <text evidence="5 6 7">Pepstatin-insensitive serine-carboxyl proteinase (PubMed:10488127, PubMed:8902622, Ref.2). Shows activity on acid-denatured hemoglobin and on casein (PubMed:10488127, Ref.2).</text>
</comment>
<comment type="catalytic activity">
    <reaction evidence="5 7">
        <text>Cleavage of casein.</text>
        <dbReference type="EC" id="3.4.21.101"/>
    </reaction>
</comment>
<comment type="cofactor">
    <cofactor evidence="1">
        <name>Ca(2+)</name>
        <dbReference type="ChEBI" id="CHEBI:29108"/>
    </cofactor>
    <text evidence="1">Binds 1 Ca(2+) ion per subunit.</text>
</comment>
<comment type="activity regulation">
    <text evidence="7">Inhibited by 1,2-epoxy-3-(p-nitrophenoxy)propane (EPNP), but not by pepstatin, pepstatin Ac (S-PI) and diazoacetyl-DL-norleucine methyl ester (DAN) (Ref.2). Not inhibited by metal ions (Ref.2).</text>
</comment>
<comment type="biophysicochemical properties">
    <kinetics>
        <KM evidence="6">5.4 uM for Lys-Pro-Ala-Asp-Phe-p-nitrophenylalanine-Arg-Leu</KM>
        <KM evidence="6">11.3 uM for Lys-Pro-Ala-Lys-Phe-p-nitrophenylalanine-Arg-Leu</KM>
        <text evidence="6">kcat is 30.4 sec(-1) with Lys-Pro-Ala-Asp-Phe-p-nitrophenylalanine-Arg-Leu as substrate (PubMed:8902622). kcat is 49.1 sec(-1) with Lys-Pro-Ala-Lys-Phe-p-nitrophenylalanine-Arg-Leu as substrate (PubMed:8902622).</text>
    </kinetics>
    <phDependence>
        <text evidence="6 7">Optimum pH is 2.7.</text>
    </phDependence>
    <temperatureDependence>
        <text evidence="7">Optimum temperature is around 55 degrees Celsius (Ref.2). Stable at temperatures below 50 degrees Celsius and completely loses its activity at 60 degrees Celsius (Ref.2).</text>
    </temperatureDependence>
</comment>
<comment type="subcellular location">
    <subcellularLocation>
        <location evidence="6 7">Secreted</location>
    </subcellularLocation>
</comment>
<comment type="PTM">
    <text evidence="5 6">Autocatalytically processed.</text>
</comment>
<sequence length="827" mass="83707">MKIEKTALTVAIALAMSSLSAHAEDAWVSTHTQAAMSPPASTQVLAASSTSATTTGNAYTLNMTGSPRIDGAAVTALEADHPLHVEVALKLRNPDALQTFLAGVTTPGSALFGKFLTPSQFTERFGPTQSQVDAVVAHLQQAGFTNIEVAPNRLLISADGTAGAATNGFRTSIKRFSANGREFFANDAPALVPASLGDSVNAVLGLQNVSVKHTLHHVYHPEDVTVPGPNVGTQAAAAVAAHHPQDFAAIYGGSSLPAATNTAVGIITWGSITQTVTDLNSFTSGAGLATVNSTITKVGSGTFANDPDSNGEWSLDSQDIVGIAGGVKQLIFYTSANGDSSSSGITDAGITASYNRAVTDNIAKLINVSLGEDETAAQQSGTQAADDAIFQQAVAQGQTFSIASGDAGVYQWSTDPTSGSPGYVANSAGTVKIDLTHYSVSEPASSPYVIQVGGTTLSTSGTTWSGETVWNEGLSAIAPSQGDNNQRLWATGGGVSLYEAAPSWQSSVSSSTKRVGPDLAFDAASSSGALIVVNGSTEQVGGTSLASPLFVGAFARIESAANNAIGFPASKFYQAFPTQTSLLHDVTSGNNGYQSHGYTAATGFDEATGFGSFDIGKLNTYAQANWVTGGGGGSTNAPPVANFSVATTGLVATFTDSSTDSDGSIASHAWTFGDGSTSTATSPSHTYSAAGTYSVAETVTDNAGATSTKTSSVTVSSSGGTGGGTVLQNGVAATGLSAAKNGQLKYTVAIPSGAKSLKIAISGGTGDADLYVKFGSAPTTSSYDCRPYVTGNTESCSFASPQTGTYYVLLNGYAAFSGVSLKATWTN</sequence>
<evidence type="ECO:0000250" key="1">
    <source>
        <dbReference type="UniProtKB" id="P42790"/>
    </source>
</evidence>
<evidence type="ECO:0000255" key="2"/>
<evidence type="ECO:0000255" key="3">
    <source>
        <dbReference type="PROSITE-ProRule" id="PRU00151"/>
    </source>
</evidence>
<evidence type="ECO:0000255" key="4">
    <source>
        <dbReference type="PROSITE-ProRule" id="PRU01032"/>
    </source>
</evidence>
<evidence type="ECO:0000269" key="5">
    <source>
    </source>
</evidence>
<evidence type="ECO:0000269" key="6">
    <source>
    </source>
</evidence>
<evidence type="ECO:0000269" key="7">
    <source ref="2"/>
</evidence>
<evidence type="ECO:0000303" key="8">
    <source>
    </source>
</evidence>
<evidence type="ECO:0000305" key="9"/>